<accession>Q72ZT1</accession>
<keyword id="KW-0548">Nucleotidyltransferase</keyword>
<keyword id="KW-0694">RNA-binding</keyword>
<keyword id="KW-0698">rRNA processing</keyword>
<keyword id="KW-0808">Transferase</keyword>
<keyword id="KW-0819">tRNA processing</keyword>
<keyword id="KW-0820">tRNA-binding</keyword>
<reference key="1">
    <citation type="journal article" date="2004" name="Nucleic Acids Res.">
        <title>The genome sequence of Bacillus cereus ATCC 10987 reveals metabolic adaptations and a large plasmid related to Bacillus anthracis pXO1.</title>
        <authorList>
            <person name="Rasko D.A."/>
            <person name="Ravel J."/>
            <person name="Oekstad O.A."/>
            <person name="Helgason E."/>
            <person name="Cer R.Z."/>
            <person name="Jiang L."/>
            <person name="Shores K.A."/>
            <person name="Fouts D.E."/>
            <person name="Tourasse N.J."/>
            <person name="Angiuoli S.V."/>
            <person name="Kolonay J.F."/>
            <person name="Nelson W.C."/>
            <person name="Kolstoe A.-B."/>
            <person name="Fraser C.M."/>
            <person name="Read T.D."/>
        </authorList>
    </citation>
    <scope>NUCLEOTIDE SEQUENCE [LARGE SCALE GENOMIC DNA]</scope>
    <source>
        <strain>ATCC 10987 / NRS 248</strain>
    </source>
</reference>
<comment type="function">
    <text evidence="1">Phosphorolytic 3'-5' exoribonuclease that plays an important role in tRNA 3'-end maturation. Removes nucleotide residues following the 3'-CCA terminus of tRNAs; can also add nucleotides to the ends of RNA molecules by using nucleoside diphosphates as substrates, but this may not be physiologically important. Probably plays a role in initiation of 16S rRNA degradation (leading to ribosome degradation) during starvation.</text>
</comment>
<comment type="catalytic activity">
    <reaction evidence="1">
        <text>tRNA(n+1) + phosphate = tRNA(n) + a ribonucleoside 5'-diphosphate</text>
        <dbReference type="Rhea" id="RHEA:10628"/>
        <dbReference type="Rhea" id="RHEA-COMP:17343"/>
        <dbReference type="Rhea" id="RHEA-COMP:17344"/>
        <dbReference type="ChEBI" id="CHEBI:43474"/>
        <dbReference type="ChEBI" id="CHEBI:57930"/>
        <dbReference type="ChEBI" id="CHEBI:173114"/>
        <dbReference type="EC" id="2.7.7.56"/>
    </reaction>
</comment>
<comment type="subunit">
    <text evidence="1">Homohexameric ring arranged as a trimer of dimers.</text>
</comment>
<comment type="similarity">
    <text evidence="1">Belongs to the RNase PH family.</text>
</comment>
<organism>
    <name type="scientific">Bacillus cereus (strain ATCC 10987 / NRS 248)</name>
    <dbReference type="NCBI Taxonomy" id="222523"/>
    <lineage>
        <taxon>Bacteria</taxon>
        <taxon>Bacillati</taxon>
        <taxon>Bacillota</taxon>
        <taxon>Bacilli</taxon>
        <taxon>Bacillales</taxon>
        <taxon>Bacillaceae</taxon>
        <taxon>Bacillus</taxon>
        <taxon>Bacillus cereus group</taxon>
    </lineage>
</organism>
<name>RNPH_BACC1</name>
<sequence length="245" mass="27001">MRVDGREKTELRHIHIHTNYLKHPEGSVLIEVGDTKVICSATIEERVPPFMRGEGKGWVTAEYAMIPRATEQRTIRESSKGKVTGRTMEIQRLIGRALRAVVDLEALGERTVWIDCDVIQADGGTRTASITGAYVAMVLAFEKLLQAEKVSKIPVKDYLAATSVGIVEEQGVVLDLNYAEDSKADVDMNVIMTGKGQFVEVQGTGEEATFSRAQLNELLDAAEQGIFQLIDMQKEALGDIVSHIE</sequence>
<proteinExistence type="inferred from homology"/>
<protein>
    <recommendedName>
        <fullName evidence="1">Ribonuclease PH</fullName>
        <shortName evidence="1">RNase PH</shortName>
        <ecNumber evidence="1">2.7.7.56</ecNumber>
    </recommendedName>
    <alternativeName>
        <fullName evidence="1">tRNA nucleotidyltransferase</fullName>
    </alternativeName>
</protein>
<feature type="chain" id="PRO_0000139863" description="Ribonuclease PH">
    <location>
        <begin position="1"/>
        <end position="245"/>
    </location>
</feature>
<feature type="binding site" evidence="1">
    <location>
        <position position="86"/>
    </location>
    <ligand>
        <name>phosphate</name>
        <dbReference type="ChEBI" id="CHEBI:43474"/>
        <note>substrate</note>
    </ligand>
</feature>
<feature type="binding site" evidence="1">
    <location>
        <begin position="124"/>
        <end position="126"/>
    </location>
    <ligand>
        <name>phosphate</name>
        <dbReference type="ChEBI" id="CHEBI:43474"/>
        <note>substrate</note>
    </ligand>
</feature>
<gene>
    <name evidence="1" type="primary">rph</name>
    <name type="ordered locus">BCE_4586</name>
</gene>
<dbReference type="EC" id="2.7.7.56" evidence="1"/>
<dbReference type="EMBL" id="AE017194">
    <property type="protein sequence ID" value="AAS43487.1"/>
    <property type="molecule type" value="Genomic_DNA"/>
</dbReference>
<dbReference type="SMR" id="Q72ZT1"/>
<dbReference type="KEGG" id="bca:BCE_4586"/>
<dbReference type="HOGENOM" id="CLU_050858_0_0_9"/>
<dbReference type="Proteomes" id="UP000002527">
    <property type="component" value="Chromosome"/>
</dbReference>
<dbReference type="GO" id="GO:0000175">
    <property type="term" value="F:3'-5'-RNA exonuclease activity"/>
    <property type="evidence" value="ECO:0007669"/>
    <property type="project" value="UniProtKB-UniRule"/>
</dbReference>
<dbReference type="GO" id="GO:0000049">
    <property type="term" value="F:tRNA binding"/>
    <property type="evidence" value="ECO:0007669"/>
    <property type="project" value="UniProtKB-UniRule"/>
</dbReference>
<dbReference type="GO" id="GO:0009022">
    <property type="term" value="F:tRNA nucleotidyltransferase activity"/>
    <property type="evidence" value="ECO:0007669"/>
    <property type="project" value="UniProtKB-UniRule"/>
</dbReference>
<dbReference type="GO" id="GO:0016075">
    <property type="term" value="P:rRNA catabolic process"/>
    <property type="evidence" value="ECO:0007669"/>
    <property type="project" value="UniProtKB-UniRule"/>
</dbReference>
<dbReference type="GO" id="GO:0006364">
    <property type="term" value="P:rRNA processing"/>
    <property type="evidence" value="ECO:0007669"/>
    <property type="project" value="UniProtKB-KW"/>
</dbReference>
<dbReference type="GO" id="GO:0008033">
    <property type="term" value="P:tRNA processing"/>
    <property type="evidence" value="ECO:0007669"/>
    <property type="project" value="UniProtKB-UniRule"/>
</dbReference>
<dbReference type="CDD" id="cd11362">
    <property type="entry name" value="RNase_PH_bact"/>
    <property type="match status" value="1"/>
</dbReference>
<dbReference type="FunFam" id="3.30.230.70:FF:000003">
    <property type="entry name" value="Ribonuclease PH"/>
    <property type="match status" value="1"/>
</dbReference>
<dbReference type="Gene3D" id="3.30.230.70">
    <property type="entry name" value="GHMP Kinase, N-terminal domain"/>
    <property type="match status" value="1"/>
</dbReference>
<dbReference type="HAMAP" id="MF_00564">
    <property type="entry name" value="RNase_PH"/>
    <property type="match status" value="1"/>
</dbReference>
<dbReference type="InterPro" id="IPR001247">
    <property type="entry name" value="ExoRNase_PH_dom1"/>
</dbReference>
<dbReference type="InterPro" id="IPR015847">
    <property type="entry name" value="ExoRNase_PH_dom2"/>
</dbReference>
<dbReference type="InterPro" id="IPR036345">
    <property type="entry name" value="ExoRNase_PH_dom2_sf"/>
</dbReference>
<dbReference type="InterPro" id="IPR027408">
    <property type="entry name" value="PNPase/RNase_PH_dom_sf"/>
</dbReference>
<dbReference type="InterPro" id="IPR020568">
    <property type="entry name" value="Ribosomal_Su5_D2-typ_SF"/>
</dbReference>
<dbReference type="InterPro" id="IPR050080">
    <property type="entry name" value="RNase_PH"/>
</dbReference>
<dbReference type="InterPro" id="IPR002381">
    <property type="entry name" value="RNase_PH_bac-type"/>
</dbReference>
<dbReference type="InterPro" id="IPR018336">
    <property type="entry name" value="RNase_PH_CS"/>
</dbReference>
<dbReference type="NCBIfam" id="TIGR01966">
    <property type="entry name" value="RNasePH"/>
    <property type="match status" value="1"/>
</dbReference>
<dbReference type="PANTHER" id="PTHR11953">
    <property type="entry name" value="EXOSOME COMPLEX COMPONENT"/>
    <property type="match status" value="1"/>
</dbReference>
<dbReference type="PANTHER" id="PTHR11953:SF0">
    <property type="entry name" value="EXOSOME COMPLEX COMPONENT RRP41"/>
    <property type="match status" value="1"/>
</dbReference>
<dbReference type="Pfam" id="PF01138">
    <property type="entry name" value="RNase_PH"/>
    <property type="match status" value="1"/>
</dbReference>
<dbReference type="Pfam" id="PF03725">
    <property type="entry name" value="RNase_PH_C"/>
    <property type="match status" value="1"/>
</dbReference>
<dbReference type="SUPFAM" id="SSF55666">
    <property type="entry name" value="Ribonuclease PH domain 2-like"/>
    <property type="match status" value="1"/>
</dbReference>
<dbReference type="SUPFAM" id="SSF54211">
    <property type="entry name" value="Ribosomal protein S5 domain 2-like"/>
    <property type="match status" value="1"/>
</dbReference>
<dbReference type="PROSITE" id="PS01277">
    <property type="entry name" value="RIBONUCLEASE_PH"/>
    <property type="match status" value="1"/>
</dbReference>
<evidence type="ECO:0000255" key="1">
    <source>
        <dbReference type="HAMAP-Rule" id="MF_00564"/>
    </source>
</evidence>